<proteinExistence type="evidence at transcript level"/>
<evidence type="ECO:0000250" key="1"/>
<evidence type="ECO:0000255" key="2"/>
<evidence type="ECO:0000269" key="3">
    <source>
    </source>
</evidence>
<evidence type="ECO:0000269" key="4">
    <source>
    </source>
</evidence>
<evidence type="ECO:0000305" key="5"/>
<gene>
    <name type="primary">GAE3</name>
    <name type="ordered locus">At4g00110</name>
    <name type="ORF">F6N15.16</name>
</gene>
<organism>
    <name type="scientific">Arabidopsis thaliana</name>
    <name type="common">Mouse-ear cress</name>
    <dbReference type="NCBI Taxonomy" id="3702"/>
    <lineage>
        <taxon>Eukaryota</taxon>
        <taxon>Viridiplantae</taxon>
        <taxon>Streptophyta</taxon>
        <taxon>Embryophyta</taxon>
        <taxon>Tracheophyta</taxon>
        <taxon>Spermatophyta</taxon>
        <taxon>Magnoliopsida</taxon>
        <taxon>eudicotyledons</taxon>
        <taxon>Gunneridae</taxon>
        <taxon>Pentapetalae</taxon>
        <taxon>rosids</taxon>
        <taxon>malvids</taxon>
        <taxon>Brassicales</taxon>
        <taxon>Brassicaceae</taxon>
        <taxon>Camelineae</taxon>
        <taxon>Arabidopsis</taxon>
    </lineage>
</organism>
<keyword id="KW-0119">Carbohydrate metabolism</keyword>
<keyword id="KW-0333">Golgi apparatus</keyword>
<keyword id="KW-0413">Isomerase</keyword>
<keyword id="KW-0472">Membrane</keyword>
<keyword id="KW-0520">NAD</keyword>
<keyword id="KW-1185">Reference proteome</keyword>
<keyword id="KW-0812">Transmembrane</keyword>
<keyword id="KW-1133">Transmembrane helix</keyword>
<feature type="chain" id="PRO_0000292598" description="UDP-glucuronate 4-epimerase 3">
    <location>
        <begin position="1"/>
        <end position="430"/>
    </location>
</feature>
<feature type="transmembrane region" description="Helical" evidence="2">
    <location>
        <begin position="29"/>
        <end position="49"/>
    </location>
</feature>
<feature type="transmembrane region" description="Helical" evidence="2">
    <location>
        <begin position="90"/>
        <end position="110"/>
    </location>
</feature>
<feature type="active site" description="Proton acceptor" evidence="1">
    <location>
        <position position="242"/>
    </location>
</feature>
<feature type="binding site" evidence="1">
    <location>
        <begin position="92"/>
        <end position="123"/>
    </location>
    <ligand>
        <name>NAD(+)</name>
        <dbReference type="ChEBI" id="CHEBI:57540"/>
    </ligand>
</feature>
<name>GAE3_ARATH</name>
<sequence length="430" mass="47690">MKQMSHLDDIPSTPGKFKPYFHRTRWQSSVAKLAFWSLVFVGLIFIFFYRSPVSSNPADPSRRSLRTYSWGGPAWEKRVRSSARLRTRRGFSVLVTGAAGFVGTHVSAALKRRGDGVLGLDNFNDYYDPSLKRARQALLERSGVFVVEGDINDAALLKKLFEVVPFTHVMHLAAQAGVRYAMENPSSYVHSNIAGFVNLLEVCKSANPQPAIVWASSSSVYGLNTKVPFSEKDRTDQPASLYAATKKAGEEIAHTYNHIYGLSLTGLRFFTVYGPWGRPDMAYFFFTRDILKGKAISIFEGVNHGTVARDFTYIDDIVKGCLGALDTAEKSTGSGGKKRGAAQLRVFNLGNTSPVPVTDLVTILERLLKVKAKRNIMKLPRNGDVQFTHANISSAQRELGYKPTTDLQTGLKKFARWYLGYYNGGKKAAS</sequence>
<dbReference type="EC" id="5.1.3.6"/>
<dbReference type="EMBL" id="AF069299">
    <property type="protein sequence ID" value="AAC19298.1"/>
    <property type="molecule type" value="Genomic_DNA"/>
</dbReference>
<dbReference type="EMBL" id="AL161471">
    <property type="protein sequence ID" value="CAB80769.1"/>
    <property type="molecule type" value="Genomic_DNA"/>
</dbReference>
<dbReference type="EMBL" id="CP002687">
    <property type="protein sequence ID" value="AEE81824.1"/>
    <property type="molecule type" value="Genomic_DNA"/>
</dbReference>
<dbReference type="EMBL" id="BT026487">
    <property type="protein sequence ID" value="ABH04594.1"/>
    <property type="molecule type" value="mRNA"/>
</dbReference>
<dbReference type="PIR" id="T01339">
    <property type="entry name" value="T01339"/>
</dbReference>
<dbReference type="RefSeq" id="NP_191922.1">
    <property type="nucleotide sequence ID" value="NM_116228.3"/>
</dbReference>
<dbReference type="SMR" id="O81312"/>
<dbReference type="FunCoup" id="O81312">
    <property type="interactions" value="387"/>
</dbReference>
<dbReference type="STRING" id="3702.O81312"/>
<dbReference type="PaxDb" id="3702-AT4G00110.1"/>
<dbReference type="ProteomicsDB" id="228894"/>
<dbReference type="EnsemblPlants" id="AT4G00110.1">
    <property type="protein sequence ID" value="AT4G00110.1"/>
    <property type="gene ID" value="AT4G00110"/>
</dbReference>
<dbReference type="GeneID" id="828145"/>
<dbReference type="Gramene" id="AT4G00110.1">
    <property type="protein sequence ID" value="AT4G00110.1"/>
    <property type="gene ID" value="AT4G00110"/>
</dbReference>
<dbReference type="KEGG" id="ath:AT4G00110"/>
<dbReference type="Araport" id="AT4G00110"/>
<dbReference type="TAIR" id="AT4G00110">
    <property type="gene designation" value="GAE3"/>
</dbReference>
<dbReference type="eggNOG" id="KOG1371">
    <property type="taxonomic scope" value="Eukaryota"/>
</dbReference>
<dbReference type="HOGENOM" id="CLU_007383_1_2_1"/>
<dbReference type="InParanoid" id="O81312"/>
<dbReference type="OMA" id="GCRHNKV"/>
<dbReference type="OrthoDB" id="202470at2759"/>
<dbReference type="PhylomeDB" id="O81312"/>
<dbReference type="BRENDA" id="5.1.3.6">
    <property type="organism ID" value="399"/>
</dbReference>
<dbReference type="PRO" id="PR:O81312"/>
<dbReference type="Proteomes" id="UP000006548">
    <property type="component" value="Chromosome 4"/>
</dbReference>
<dbReference type="ExpressionAtlas" id="O81312">
    <property type="expression patterns" value="baseline and differential"/>
</dbReference>
<dbReference type="GO" id="GO:0032580">
    <property type="term" value="C:Golgi cisterna membrane"/>
    <property type="evidence" value="ECO:0007669"/>
    <property type="project" value="UniProtKB-SubCell"/>
</dbReference>
<dbReference type="GO" id="GO:0016020">
    <property type="term" value="C:membrane"/>
    <property type="evidence" value="ECO:0000304"/>
    <property type="project" value="TAIR"/>
</dbReference>
<dbReference type="GO" id="GO:0050378">
    <property type="term" value="F:UDP-glucuronate 4-epimerase activity"/>
    <property type="evidence" value="ECO:0007669"/>
    <property type="project" value="UniProtKB-EC"/>
</dbReference>
<dbReference type="FunFam" id="3.40.50.720:FF:000198">
    <property type="entry name" value="UDP-glucuronate 4-epimerase 3"/>
    <property type="match status" value="1"/>
</dbReference>
<dbReference type="Gene3D" id="3.40.50.720">
    <property type="entry name" value="NAD(P)-binding Rossmann-like Domain"/>
    <property type="match status" value="1"/>
</dbReference>
<dbReference type="InterPro" id="IPR001509">
    <property type="entry name" value="Epimerase_deHydtase"/>
</dbReference>
<dbReference type="InterPro" id="IPR036291">
    <property type="entry name" value="NAD(P)-bd_dom_sf"/>
</dbReference>
<dbReference type="PANTHER" id="PTHR43574">
    <property type="entry name" value="EPIMERASE-RELATED"/>
    <property type="match status" value="1"/>
</dbReference>
<dbReference type="Pfam" id="PF01370">
    <property type="entry name" value="Epimerase"/>
    <property type="match status" value="1"/>
</dbReference>
<dbReference type="PRINTS" id="PR01713">
    <property type="entry name" value="NUCEPIMERASE"/>
</dbReference>
<dbReference type="SUPFAM" id="SSF51735">
    <property type="entry name" value="NAD(P)-binding Rossmann-fold domains"/>
    <property type="match status" value="1"/>
</dbReference>
<accession>O81312</accession>
<reference key="1">
    <citation type="journal article" date="1999" name="Nature">
        <title>Sequence and analysis of chromosome 4 of the plant Arabidopsis thaliana.</title>
        <authorList>
            <person name="Mayer K.F.X."/>
            <person name="Schueller C."/>
            <person name="Wambutt R."/>
            <person name="Murphy G."/>
            <person name="Volckaert G."/>
            <person name="Pohl T."/>
            <person name="Duesterhoeft A."/>
            <person name="Stiekema W."/>
            <person name="Entian K.-D."/>
            <person name="Terryn N."/>
            <person name="Harris B."/>
            <person name="Ansorge W."/>
            <person name="Brandt P."/>
            <person name="Grivell L.A."/>
            <person name="Rieger M."/>
            <person name="Weichselgartner M."/>
            <person name="de Simone V."/>
            <person name="Obermaier B."/>
            <person name="Mache R."/>
            <person name="Mueller M."/>
            <person name="Kreis M."/>
            <person name="Delseny M."/>
            <person name="Puigdomenech P."/>
            <person name="Watson M."/>
            <person name="Schmidtheini T."/>
            <person name="Reichert B."/>
            <person name="Portetelle D."/>
            <person name="Perez-Alonso M."/>
            <person name="Boutry M."/>
            <person name="Bancroft I."/>
            <person name="Vos P."/>
            <person name="Hoheisel J."/>
            <person name="Zimmermann W."/>
            <person name="Wedler H."/>
            <person name="Ridley P."/>
            <person name="Langham S.-A."/>
            <person name="McCullagh B."/>
            <person name="Bilham L."/>
            <person name="Robben J."/>
            <person name="van der Schueren J."/>
            <person name="Grymonprez B."/>
            <person name="Chuang Y.-J."/>
            <person name="Vandenbussche F."/>
            <person name="Braeken M."/>
            <person name="Weltjens I."/>
            <person name="Voet M."/>
            <person name="Bastiaens I."/>
            <person name="Aert R."/>
            <person name="Defoor E."/>
            <person name="Weitzenegger T."/>
            <person name="Bothe G."/>
            <person name="Ramsperger U."/>
            <person name="Hilbert H."/>
            <person name="Braun M."/>
            <person name="Holzer E."/>
            <person name="Brandt A."/>
            <person name="Peters S."/>
            <person name="van Staveren M."/>
            <person name="Dirkse W."/>
            <person name="Mooijman P."/>
            <person name="Klein Lankhorst R."/>
            <person name="Rose M."/>
            <person name="Hauf J."/>
            <person name="Koetter P."/>
            <person name="Berneiser S."/>
            <person name="Hempel S."/>
            <person name="Feldpausch M."/>
            <person name="Lamberth S."/>
            <person name="Van den Daele H."/>
            <person name="De Keyser A."/>
            <person name="Buysshaert C."/>
            <person name="Gielen J."/>
            <person name="Villarroel R."/>
            <person name="De Clercq R."/>
            <person name="van Montagu M."/>
            <person name="Rogers J."/>
            <person name="Cronin A."/>
            <person name="Quail M.A."/>
            <person name="Bray-Allen S."/>
            <person name="Clark L."/>
            <person name="Doggett J."/>
            <person name="Hall S."/>
            <person name="Kay M."/>
            <person name="Lennard N."/>
            <person name="McLay K."/>
            <person name="Mayes R."/>
            <person name="Pettett A."/>
            <person name="Rajandream M.A."/>
            <person name="Lyne M."/>
            <person name="Benes V."/>
            <person name="Rechmann S."/>
            <person name="Borkova D."/>
            <person name="Bloecker H."/>
            <person name="Scharfe M."/>
            <person name="Grimm M."/>
            <person name="Loehnert T.-H."/>
            <person name="Dose S."/>
            <person name="de Haan M."/>
            <person name="Maarse A.C."/>
            <person name="Schaefer M."/>
            <person name="Mueller-Auer S."/>
            <person name="Gabel C."/>
            <person name="Fuchs M."/>
            <person name="Fartmann B."/>
            <person name="Granderath K."/>
            <person name="Dauner D."/>
            <person name="Herzl A."/>
            <person name="Neumann S."/>
            <person name="Argiriou A."/>
            <person name="Vitale D."/>
            <person name="Liguori R."/>
            <person name="Piravandi E."/>
            <person name="Massenet O."/>
            <person name="Quigley F."/>
            <person name="Clabauld G."/>
            <person name="Muendlein A."/>
            <person name="Felber R."/>
            <person name="Schnabl S."/>
            <person name="Hiller R."/>
            <person name="Schmidt W."/>
            <person name="Lecharny A."/>
            <person name="Aubourg S."/>
            <person name="Chefdor F."/>
            <person name="Cooke R."/>
            <person name="Berger C."/>
            <person name="Monfort A."/>
            <person name="Casacuberta E."/>
            <person name="Gibbons T."/>
            <person name="Weber N."/>
            <person name="Vandenbol M."/>
            <person name="Bargues M."/>
            <person name="Terol J."/>
            <person name="Torres A."/>
            <person name="Perez-Perez A."/>
            <person name="Purnelle B."/>
            <person name="Bent E."/>
            <person name="Johnson S."/>
            <person name="Tacon D."/>
            <person name="Jesse T."/>
            <person name="Heijnen L."/>
            <person name="Schwarz S."/>
            <person name="Scholler P."/>
            <person name="Heber S."/>
            <person name="Francs P."/>
            <person name="Bielke C."/>
            <person name="Frishman D."/>
            <person name="Haase D."/>
            <person name="Lemcke K."/>
            <person name="Mewes H.-W."/>
            <person name="Stocker S."/>
            <person name="Zaccaria P."/>
            <person name="Bevan M."/>
            <person name="Wilson R.K."/>
            <person name="de la Bastide M."/>
            <person name="Habermann K."/>
            <person name="Parnell L."/>
            <person name="Dedhia N."/>
            <person name="Gnoj L."/>
            <person name="Schutz K."/>
            <person name="Huang E."/>
            <person name="Spiegel L."/>
            <person name="Sekhon M."/>
            <person name="Murray J."/>
            <person name="Sheet P."/>
            <person name="Cordes M."/>
            <person name="Abu-Threideh J."/>
            <person name="Stoneking T."/>
            <person name="Kalicki J."/>
            <person name="Graves T."/>
            <person name="Harmon G."/>
            <person name="Edwards J."/>
            <person name="Latreille P."/>
            <person name="Courtney L."/>
            <person name="Cloud J."/>
            <person name="Abbott A."/>
            <person name="Scott K."/>
            <person name="Johnson D."/>
            <person name="Minx P."/>
            <person name="Bentley D."/>
            <person name="Fulton B."/>
            <person name="Miller N."/>
            <person name="Greco T."/>
            <person name="Kemp K."/>
            <person name="Kramer J."/>
            <person name="Fulton L."/>
            <person name="Mardis E."/>
            <person name="Dante M."/>
            <person name="Pepin K."/>
            <person name="Hillier L.W."/>
            <person name="Nelson J."/>
            <person name="Spieth J."/>
            <person name="Ryan E."/>
            <person name="Andrews S."/>
            <person name="Geisel C."/>
            <person name="Layman D."/>
            <person name="Du H."/>
            <person name="Ali J."/>
            <person name="Berghoff A."/>
            <person name="Jones K."/>
            <person name="Drone K."/>
            <person name="Cotton M."/>
            <person name="Joshu C."/>
            <person name="Antonoiu B."/>
            <person name="Zidanic M."/>
            <person name="Strong C."/>
            <person name="Sun H."/>
            <person name="Lamar B."/>
            <person name="Yordan C."/>
            <person name="Ma P."/>
            <person name="Zhong J."/>
            <person name="Preston R."/>
            <person name="Vil D."/>
            <person name="Shekher M."/>
            <person name="Matero A."/>
            <person name="Shah R."/>
            <person name="Swaby I.K."/>
            <person name="O'Shaughnessy A."/>
            <person name="Rodriguez M."/>
            <person name="Hoffman J."/>
            <person name="Till S."/>
            <person name="Granat S."/>
            <person name="Shohdy N."/>
            <person name="Hasegawa A."/>
            <person name="Hameed A."/>
            <person name="Lodhi M."/>
            <person name="Johnson A."/>
            <person name="Chen E."/>
            <person name="Marra M.A."/>
            <person name="Martienssen R."/>
            <person name="McCombie W.R."/>
        </authorList>
    </citation>
    <scope>NUCLEOTIDE SEQUENCE [LARGE SCALE GENOMIC DNA]</scope>
    <source>
        <strain>cv. Columbia</strain>
    </source>
</reference>
<reference key="2">
    <citation type="journal article" date="2017" name="Plant J.">
        <title>Araport11: a complete reannotation of the Arabidopsis thaliana reference genome.</title>
        <authorList>
            <person name="Cheng C.Y."/>
            <person name="Krishnakumar V."/>
            <person name="Chan A.P."/>
            <person name="Thibaud-Nissen F."/>
            <person name="Schobel S."/>
            <person name="Town C.D."/>
        </authorList>
    </citation>
    <scope>GENOME REANNOTATION</scope>
    <source>
        <strain>cv. Columbia</strain>
    </source>
</reference>
<reference key="3">
    <citation type="submission" date="2006-08" db="EMBL/GenBank/DDBJ databases">
        <title>Arabidopsis ORF clones.</title>
        <authorList>
            <person name="Quinitio C."/>
            <person name="Chen H."/>
            <person name="Kim C.J."/>
            <person name="Shinn P."/>
            <person name="Ecker J.R."/>
        </authorList>
    </citation>
    <scope>NUCLEOTIDE SEQUENCE [LARGE SCALE MRNA]</scope>
    <source>
        <strain>cv. Columbia</strain>
    </source>
</reference>
<reference key="4">
    <citation type="journal article" date="2001" name="Plant Mol. Biol.">
        <title>Molecular genetics of nucleotide sugar interconversion pathways in plants.</title>
        <authorList>
            <person name="Reiter W.-D."/>
            <person name="Vanzin G.F."/>
        </authorList>
    </citation>
    <scope>IDENTIFICATION</scope>
    <scope>NOMENCLATURE</scope>
</reference>
<reference key="5">
    <citation type="journal article" date="2004" name="Plant Physiol.">
        <title>The biosynthesis of D-galacturonate in plants. Functional cloning and characterization of a membrane-anchored UDP-D-glucuronate 4-epimerase from Arabidopsis.</title>
        <authorList>
            <person name="Moelhoej M."/>
            <person name="Verma R."/>
            <person name="Reiter W.-D."/>
        </authorList>
    </citation>
    <scope>IDENTIFICATION</scope>
    <scope>TISSUE SPECIFICITY</scope>
</reference>
<reference key="6">
    <citation type="journal article" date="2004" name="FEBS Lett.">
        <title>Identification and characterization of a UDP-D-glucuronate 4-epimerase in Arabidopsis.</title>
        <authorList>
            <person name="Usadel B."/>
            <person name="Schlueter U."/>
            <person name="Moelhoej M."/>
            <person name="Gipmans M."/>
            <person name="Verma R."/>
            <person name="Kossmann J."/>
            <person name="Reiter W.-D."/>
            <person name="Pauly M."/>
        </authorList>
    </citation>
    <scope>TISSUE SPECIFICITY</scope>
</reference>
<comment type="function">
    <text>Involved in the synthesis of the negatively charged monosaccharide that forms the backbone of pectic cell wall components.</text>
</comment>
<comment type="catalytic activity">
    <reaction>
        <text>UDP-alpha-D-glucuronate = UDP-alpha-D-galacturonate</text>
        <dbReference type="Rhea" id="RHEA:11404"/>
        <dbReference type="ChEBI" id="CHEBI:57635"/>
        <dbReference type="ChEBI" id="CHEBI:58052"/>
        <dbReference type="EC" id="5.1.3.6"/>
    </reaction>
</comment>
<comment type="subunit">
    <text evidence="1">Homodimer.</text>
</comment>
<comment type="subcellular location">
    <subcellularLocation>
        <location evidence="5">Golgi apparatus</location>
        <location evidence="5">Golgi stack membrane</location>
        <topology evidence="5">Multi-pass membrane protein</topology>
    </subcellularLocation>
</comment>
<comment type="tissue specificity">
    <text evidence="3 4">In roots, leaves, siliques, flowers, pollen and stems.</text>
</comment>
<comment type="similarity">
    <text evidence="5">Belongs to the NAD(P)-dependent epimerase/dehydratase family.</text>
</comment>
<protein>
    <recommendedName>
        <fullName>UDP-glucuronate 4-epimerase 3</fullName>
        <ecNumber>5.1.3.6</ecNumber>
    </recommendedName>
    <alternativeName>
        <fullName>UDP-glucuronic acid epimerase 3</fullName>
    </alternativeName>
</protein>